<gene>
    <name evidence="1" type="primary">cmk</name>
    <name type="ordered locus">CHY_1927</name>
</gene>
<evidence type="ECO:0000255" key="1">
    <source>
        <dbReference type="HAMAP-Rule" id="MF_00238"/>
    </source>
</evidence>
<sequence>MRIAIDGPAGAGKSTVARILAKKLSFTYLDTGAMYRAVTVLFLENNLSLEDENGIKRLLEKTDIKIIPGDEGQKILLNERDVTELIRTPQVSELVAKVSALPEVRKYLTELQRKIIAKGNVVADGRDIGTVVMPEAEVKIFLTASAEERARRRHRELLAKGYEVSYEEVFREVLKRDELDTTREISPLRKAEDAILVDTTGLKIEEVVAKLLEIIGRKNDVL</sequence>
<reference key="1">
    <citation type="journal article" date="2005" name="PLoS Genet.">
        <title>Life in hot carbon monoxide: the complete genome sequence of Carboxydothermus hydrogenoformans Z-2901.</title>
        <authorList>
            <person name="Wu M."/>
            <person name="Ren Q."/>
            <person name="Durkin A.S."/>
            <person name="Daugherty S.C."/>
            <person name="Brinkac L.M."/>
            <person name="Dodson R.J."/>
            <person name="Madupu R."/>
            <person name="Sullivan S.A."/>
            <person name="Kolonay J.F."/>
            <person name="Nelson W.C."/>
            <person name="Tallon L.J."/>
            <person name="Jones K.M."/>
            <person name="Ulrich L.E."/>
            <person name="Gonzalez J.M."/>
            <person name="Zhulin I.B."/>
            <person name="Robb F.T."/>
            <person name="Eisen J.A."/>
        </authorList>
    </citation>
    <scope>NUCLEOTIDE SEQUENCE [LARGE SCALE GENOMIC DNA]</scope>
    <source>
        <strain>ATCC BAA-161 / DSM 6008 / Z-2901</strain>
    </source>
</reference>
<keyword id="KW-0067">ATP-binding</keyword>
<keyword id="KW-0963">Cytoplasm</keyword>
<keyword id="KW-0418">Kinase</keyword>
<keyword id="KW-0547">Nucleotide-binding</keyword>
<keyword id="KW-1185">Reference proteome</keyword>
<keyword id="KW-0808">Transferase</keyword>
<proteinExistence type="inferred from homology"/>
<name>KCY_CARHZ</name>
<accession>Q3AAT8</accession>
<comment type="catalytic activity">
    <reaction evidence="1">
        <text>CMP + ATP = CDP + ADP</text>
        <dbReference type="Rhea" id="RHEA:11600"/>
        <dbReference type="ChEBI" id="CHEBI:30616"/>
        <dbReference type="ChEBI" id="CHEBI:58069"/>
        <dbReference type="ChEBI" id="CHEBI:60377"/>
        <dbReference type="ChEBI" id="CHEBI:456216"/>
        <dbReference type="EC" id="2.7.4.25"/>
    </reaction>
</comment>
<comment type="catalytic activity">
    <reaction evidence="1">
        <text>dCMP + ATP = dCDP + ADP</text>
        <dbReference type="Rhea" id="RHEA:25094"/>
        <dbReference type="ChEBI" id="CHEBI:30616"/>
        <dbReference type="ChEBI" id="CHEBI:57566"/>
        <dbReference type="ChEBI" id="CHEBI:58593"/>
        <dbReference type="ChEBI" id="CHEBI:456216"/>
        <dbReference type="EC" id="2.7.4.25"/>
    </reaction>
</comment>
<comment type="subcellular location">
    <subcellularLocation>
        <location evidence="1">Cytoplasm</location>
    </subcellularLocation>
</comment>
<comment type="similarity">
    <text evidence="1">Belongs to the cytidylate kinase family. Type 1 subfamily.</text>
</comment>
<organism>
    <name type="scientific">Carboxydothermus hydrogenoformans (strain ATCC BAA-161 / DSM 6008 / Z-2901)</name>
    <dbReference type="NCBI Taxonomy" id="246194"/>
    <lineage>
        <taxon>Bacteria</taxon>
        <taxon>Bacillati</taxon>
        <taxon>Bacillota</taxon>
        <taxon>Clostridia</taxon>
        <taxon>Thermoanaerobacterales</taxon>
        <taxon>Thermoanaerobacteraceae</taxon>
        <taxon>Carboxydothermus</taxon>
    </lineage>
</organism>
<feature type="chain" id="PRO_1000078334" description="Cytidylate kinase">
    <location>
        <begin position="1"/>
        <end position="222"/>
    </location>
</feature>
<feature type="binding site" evidence="1">
    <location>
        <begin position="7"/>
        <end position="15"/>
    </location>
    <ligand>
        <name>ATP</name>
        <dbReference type="ChEBI" id="CHEBI:30616"/>
    </ligand>
</feature>
<dbReference type="EC" id="2.7.4.25" evidence="1"/>
<dbReference type="EMBL" id="CP000141">
    <property type="protein sequence ID" value="ABB14507.1"/>
    <property type="molecule type" value="Genomic_DNA"/>
</dbReference>
<dbReference type="RefSeq" id="WP_011344819.1">
    <property type="nucleotide sequence ID" value="NC_007503.1"/>
</dbReference>
<dbReference type="SMR" id="Q3AAT8"/>
<dbReference type="FunCoup" id="Q3AAT8">
    <property type="interactions" value="255"/>
</dbReference>
<dbReference type="STRING" id="246194.CHY_1927"/>
<dbReference type="KEGG" id="chy:CHY_1927"/>
<dbReference type="eggNOG" id="COG0283">
    <property type="taxonomic scope" value="Bacteria"/>
</dbReference>
<dbReference type="HOGENOM" id="CLU_079959_0_2_9"/>
<dbReference type="InParanoid" id="Q3AAT8"/>
<dbReference type="OrthoDB" id="9807434at2"/>
<dbReference type="Proteomes" id="UP000002706">
    <property type="component" value="Chromosome"/>
</dbReference>
<dbReference type="GO" id="GO:0005829">
    <property type="term" value="C:cytosol"/>
    <property type="evidence" value="ECO:0007669"/>
    <property type="project" value="TreeGrafter"/>
</dbReference>
<dbReference type="GO" id="GO:0005524">
    <property type="term" value="F:ATP binding"/>
    <property type="evidence" value="ECO:0007669"/>
    <property type="project" value="UniProtKB-UniRule"/>
</dbReference>
<dbReference type="GO" id="GO:0036430">
    <property type="term" value="F:CMP kinase activity"/>
    <property type="evidence" value="ECO:0007669"/>
    <property type="project" value="RHEA"/>
</dbReference>
<dbReference type="GO" id="GO:0036431">
    <property type="term" value="F:dCMP kinase activity"/>
    <property type="evidence" value="ECO:0007669"/>
    <property type="project" value="RHEA"/>
</dbReference>
<dbReference type="GO" id="GO:0015949">
    <property type="term" value="P:nucleobase-containing small molecule interconversion"/>
    <property type="evidence" value="ECO:0007669"/>
    <property type="project" value="TreeGrafter"/>
</dbReference>
<dbReference type="GO" id="GO:0006220">
    <property type="term" value="P:pyrimidine nucleotide metabolic process"/>
    <property type="evidence" value="ECO:0007669"/>
    <property type="project" value="UniProtKB-UniRule"/>
</dbReference>
<dbReference type="CDD" id="cd02020">
    <property type="entry name" value="CMPK"/>
    <property type="match status" value="1"/>
</dbReference>
<dbReference type="Gene3D" id="3.40.50.300">
    <property type="entry name" value="P-loop containing nucleotide triphosphate hydrolases"/>
    <property type="match status" value="1"/>
</dbReference>
<dbReference type="HAMAP" id="MF_00238">
    <property type="entry name" value="Cytidyl_kinase_type1"/>
    <property type="match status" value="1"/>
</dbReference>
<dbReference type="InterPro" id="IPR003136">
    <property type="entry name" value="Cytidylate_kin"/>
</dbReference>
<dbReference type="InterPro" id="IPR011994">
    <property type="entry name" value="Cytidylate_kinase_dom"/>
</dbReference>
<dbReference type="InterPro" id="IPR027417">
    <property type="entry name" value="P-loop_NTPase"/>
</dbReference>
<dbReference type="NCBIfam" id="TIGR00017">
    <property type="entry name" value="cmk"/>
    <property type="match status" value="1"/>
</dbReference>
<dbReference type="PANTHER" id="PTHR21299:SF2">
    <property type="entry name" value="CYTIDYLATE KINASE"/>
    <property type="match status" value="1"/>
</dbReference>
<dbReference type="PANTHER" id="PTHR21299">
    <property type="entry name" value="CYTIDYLATE KINASE/PANTOATE-BETA-ALANINE LIGASE"/>
    <property type="match status" value="1"/>
</dbReference>
<dbReference type="Pfam" id="PF02224">
    <property type="entry name" value="Cytidylate_kin"/>
    <property type="match status" value="1"/>
</dbReference>
<dbReference type="SUPFAM" id="SSF52540">
    <property type="entry name" value="P-loop containing nucleoside triphosphate hydrolases"/>
    <property type="match status" value="1"/>
</dbReference>
<protein>
    <recommendedName>
        <fullName evidence="1">Cytidylate kinase</fullName>
        <shortName evidence="1">CK</shortName>
        <ecNumber evidence="1">2.7.4.25</ecNumber>
    </recommendedName>
    <alternativeName>
        <fullName evidence="1">Cytidine monophosphate kinase</fullName>
        <shortName evidence="1">CMP kinase</shortName>
    </alternativeName>
</protein>